<organism>
    <name type="scientific">Alkaliphilus metalliredigens (strain QYMF)</name>
    <dbReference type="NCBI Taxonomy" id="293826"/>
    <lineage>
        <taxon>Bacteria</taxon>
        <taxon>Bacillati</taxon>
        <taxon>Bacillota</taxon>
        <taxon>Clostridia</taxon>
        <taxon>Peptostreptococcales</taxon>
        <taxon>Natronincolaceae</taxon>
        <taxon>Alkaliphilus</taxon>
    </lineage>
</organism>
<gene>
    <name evidence="1" type="primary">ispE</name>
    <name type="ordered locus">Amet_4604</name>
</gene>
<sequence>MKQVQLKSRAKINLSLDVLGRRSDGYHEVEMIMQQIDLYDLITLEERKDSEIRISTQCEFIPTNEDNIAYRAAEIIRENSGINRGVNIYIDKRIPVAAGLAGGSSNAAAVLEGLNHMWRLRLTPKQLMDLGVKLGADVPFCILGGAAIARGIGEILTPIEGLKNVWMVIAKPAISVSTAEVYRQLDLSKLDSRPNTDEVIQAVKEGDLYTLAGKMHNVLESVTQRNHPIIREMKRKMLEYNAIGAMMSGSGPTVFGIYKNYGRAKSAYENLSILYKQTHLVQSYSRRKWDE</sequence>
<feature type="chain" id="PRO_1000092058" description="4-diphosphocytidyl-2-C-methyl-D-erythritol kinase">
    <location>
        <begin position="1"/>
        <end position="291"/>
    </location>
</feature>
<feature type="active site" evidence="1">
    <location>
        <position position="11"/>
    </location>
</feature>
<feature type="active site" evidence="1">
    <location>
        <position position="137"/>
    </location>
</feature>
<feature type="binding site" evidence="1">
    <location>
        <begin position="95"/>
        <end position="105"/>
    </location>
    <ligand>
        <name>ATP</name>
        <dbReference type="ChEBI" id="CHEBI:30616"/>
    </ligand>
</feature>
<accession>A6TWV7</accession>
<reference key="1">
    <citation type="journal article" date="2016" name="Genome Announc.">
        <title>Complete genome sequence of Alkaliphilus metalliredigens strain QYMF, an alkaliphilic and metal-reducing bacterium isolated from borax-contaminated leachate ponds.</title>
        <authorList>
            <person name="Hwang C."/>
            <person name="Copeland A."/>
            <person name="Lucas S."/>
            <person name="Lapidus A."/>
            <person name="Barry K."/>
            <person name="Detter J.C."/>
            <person name="Glavina Del Rio T."/>
            <person name="Hammon N."/>
            <person name="Israni S."/>
            <person name="Dalin E."/>
            <person name="Tice H."/>
            <person name="Pitluck S."/>
            <person name="Chertkov O."/>
            <person name="Brettin T."/>
            <person name="Bruce D."/>
            <person name="Han C."/>
            <person name="Schmutz J."/>
            <person name="Larimer F."/>
            <person name="Land M.L."/>
            <person name="Hauser L."/>
            <person name="Kyrpides N."/>
            <person name="Mikhailova N."/>
            <person name="Ye Q."/>
            <person name="Zhou J."/>
            <person name="Richardson P."/>
            <person name="Fields M.W."/>
        </authorList>
    </citation>
    <scope>NUCLEOTIDE SEQUENCE [LARGE SCALE GENOMIC DNA]</scope>
    <source>
        <strain>QYMF</strain>
    </source>
</reference>
<keyword id="KW-0067">ATP-binding</keyword>
<keyword id="KW-0414">Isoprene biosynthesis</keyword>
<keyword id="KW-0418">Kinase</keyword>
<keyword id="KW-0547">Nucleotide-binding</keyword>
<keyword id="KW-1185">Reference proteome</keyword>
<keyword id="KW-0808">Transferase</keyword>
<evidence type="ECO:0000255" key="1">
    <source>
        <dbReference type="HAMAP-Rule" id="MF_00061"/>
    </source>
</evidence>
<dbReference type="EC" id="2.7.1.148" evidence="1"/>
<dbReference type="EMBL" id="CP000724">
    <property type="protein sequence ID" value="ABR50675.1"/>
    <property type="molecule type" value="Genomic_DNA"/>
</dbReference>
<dbReference type="RefSeq" id="WP_012065563.1">
    <property type="nucleotide sequence ID" value="NC_009633.1"/>
</dbReference>
<dbReference type="SMR" id="A6TWV7"/>
<dbReference type="STRING" id="293826.Amet_4604"/>
<dbReference type="KEGG" id="amt:Amet_4604"/>
<dbReference type="eggNOG" id="COG1947">
    <property type="taxonomic scope" value="Bacteria"/>
</dbReference>
<dbReference type="HOGENOM" id="CLU_053057_1_1_9"/>
<dbReference type="OrthoDB" id="9809438at2"/>
<dbReference type="UniPathway" id="UPA00056">
    <property type="reaction ID" value="UER00094"/>
</dbReference>
<dbReference type="Proteomes" id="UP000001572">
    <property type="component" value="Chromosome"/>
</dbReference>
<dbReference type="GO" id="GO:0050515">
    <property type="term" value="F:4-(cytidine 5'-diphospho)-2-C-methyl-D-erythritol kinase activity"/>
    <property type="evidence" value="ECO:0007669"/>
    <property type="project" value="UniProtKB-UniRule"/>
</dbReference>
<dbReference type="GO" id="GO:0005524">
    <property type="term" value="F:ATP binding"/>
    <property type="evidence" value="ECO:0007669"/>
    <property type="project" value="UniProtKB-UniRule"/>
</dbReference>
<dbReference type="GO" id="GO:0019288">
    <property type="term" value="P:isopentenyl diphosphate biosynthetic process, methylerythritol 4-phosphate pathway"/>
    <property type="evidence" value="ECO:0007669"/>
    <property type="project" value="UniProtKB-UniRule"/>
</dbReference>
<dbReference type="GO" id="GO:0016114">
    <property type="term" value="P:terpenoid biosynthetic process"/>
    <property type="evidence" value="ECO:0007669"/>
    <property type="project" value="InterPro"/>
</dbReference>
<dbReference type="Gene3D" id="3.30.230.10">
    <property type="match status" value="1"/>
</dbReference>
<dbReference type="Gene3D" id="3.30.70.890">
    <property type="entry name" value="GHMP kinase, C-terminal domain"/>
    <property type="match status" value="1"/>
</dbReference>
<dbReference type="HAMAP" id="MF_00061">
    <property type="entry name" value="IspE"/>
    <property type="match status" value="1"/>
</dbReference>
<dbReference type="InterPro" id="IPR013750">
    <property type="entry name" value="GHMP_kinase_C_dom"/>
</dbReference>
<dbReference type="InterPro" id="IPR036554">
    <property type="entry name" value="GHMP_kinase_C_sf"/>
</dbReference>
<dbReference type="InterPro" id="IPR006204">
    <property type="entry name" value="GHMP_kinase_N_dom"/>
</dbReference>
<dbReference type="InterPro" id="IPR004424">
    <property type="entry name" value="IspE"/>
</dbReference>
<dbReference type="InterPro" id="IPR020568">
    <property type="entry name" value="Ribosomal_Su5_D2-typ_SF"/>
</dbReference>
<dbReference type="InterPro" id="IPR014721">
    <property type="entry name" value="Ribsml_uS5_D2-typ_fold_subgr"/>
</dbReference>
<dbReference type="NCBIfam" id="TIGR00154">
    <property type="entry name" value="ispE"/>
    <property type="match status" value="1"/>
</dbReference>
<dbReference type="NCBIfam" id="NF011202">
    <property type="entry name" value="PRK14608.1"/>
    <property type="match status" value="1"/>
</dbReference>
<dbReference type="PANTHER" id="PTHR43527">
    <property type="entry name" value="4-DIPHOSPHOCYTIDYL-2-C-METHYL-D-ERYTHRITOL KINASE, CHLOROPLASTIC"/>
    <property type="match status" value="1"/>
</dbReference>
<dbReference type="PANTHER" id="PTHR43527:SF2">
    <property type="entry name" value="4-DIPHOSPHOCYTIDYL-2-C-METHYL-D-ERYTHRITOL KINASE, CHLOROPLASTIC"/>
    <property type="match status" value="1"/>
</dbReference>
<dbReference type="Pfam" id="PF08544">
    <property type="entry name" value="GHMP_kinases_C"/>
    <property type="match status" value="1"/>
</dbReference>
<dbReference type="Pfam" id="PF00288">
    <property type="entry name" value="GHMP_kinases_N"/>
    <property type="match status" value="1"/>
</dbReference>
<dbReference type="PIRSF" id="PIRSF010376">
    <property type="entry name" value="IspE"/>
    <property type="match status" value="1"/>
</dbReference>
<dbReference type="PRINTS" id="PR00958">
    <property type="entry name" value="HOMSERKINASE"/>
</dbReference>
<dbReference type="SUPFAM" id="SSF55060">
    <property type="entry name" value="GHMP Kinase, C-terminal domain"/>
    <property type="match status" value="1"/>
</dbReference>
<dbReference type="SUPFAM" id="SSF54211">
    <property type="entry name" value="Ribosomal protein S5 domain 2-like"/>
    <property type="match status" value="1"/>
</dbReference>
<name>ISPE_ALKMQ</name>
<protein>
    <recommendedName>
        <fullName evidence="1">4-diphosphocytidyl-2-C-methyl-D-erythritol kinase</fullName>
        <shortName evidence="1">CMK</shortName>
        <ecNumber evidence="1">2.7.1.148</ecNumber>
    </recommendedName>
    <alternativeName>
        <fullName evidence="1">4-(cytidine-5'-diphospho)-2-C-methyl-D-erythritol kinase</fullName>
    </alternativeName>
</protein>
<comment type="function">
    <text evidence="1">Catalyzes the phosphorylation of the position 2 hydroxy group of 4-diphosphocytidyl-2C-methyl-D-erythritol.</text>
</comment>
<comment type="catalytic activity">
    <reaction evidence="1">
        <text>4-CDP-2-C-methyl-D-erythritol + ATP = 4-CDP-2-C-methyl-D-erythritol 2-phosphate + ADP + H(+)</text>
        <dbReference type="Rhea" id="RHEA:18437"/>
        <dbReference type="ChEBI" id="CHEBI:15378"/>
        <dbReference type="ChEBI" id="CHEBI:30616"/>
        <dbReference type="ChEBI" id="CHEBI:57823"/>
        <dbReference type="ChEBI" id="CHEBI:57919"/>
        <dbReference type="ChEBI" id="CHEBI:456216"/>
        <dbReference type="EC" id="2.7.1.148"/>
    </reaction>
</comment>
<comment type="pathway">
    <text evidence="1">Isoprenoid biosynthesis; isopentenyl diphosphate biosynthesis via DXP pathway; isopentenyl diphosphate from 1-deoxy-D-xylulose 5-phosphate: step 3/6.</text>
</comment>
<comment type="similarity">
    <text evidence="1">Belongs to the GHMP kinase family. IspE subfamily.</text>
</comment>
<proteinExistence type="inferred from homology"/>